<evidence type="ECO:0000255" key="1">
    <source>
        <dbReference type="HAMAP-Rule" id="MF_00016"/>
    </source>
</evidence>
<evidence type="ECO:0000256" key="2">
    <source>
        <dbReference type="SAM" id="MobiDB-lite"/>
    </source>
</evidence>
<name>RUVB_BRADU</name>
<reference key="1">
    <citation type="journal article" date="2002" name="DNA Res.">
        <title>Complete genomic sequence of nitrogen-fixing symbiotic bacterium Bradyrhizobium japonicum USDA110.</title>
        <authorList>
            <person name="Kaneko T."/>
            <person name="Nakamura Y."/>
            <person name="Sato S."/>
            <person name="Minamisawa K."/>
            <person name="Uchiumi T."/>
            <person name="Sasamoto S."/>
            <person name="Watanabe A."/>
            <person name="Idesawa K."/>
            <person name="Iriguchi M."/>
            <person name="Kawashima K."/>
            <person name="Kohara M."/>
            <person name="Matsumoto M."/>
            <person name="Shimpo S."/>
            <person name="Tsuruoka H."/>
            <person name="Wada T."/>
            <person name="Yamada M."/>
            <person name="Tabata S."/>
        </authorList>
    </citation>
    <scope>NUCLEOTIDE SEQUENCE [LARGE SCALE GENOMIC DNA]</scope>
    <source>
        <strain>JCM 10833 / BCRC 13528 / IAM 13628 / NBRC 14792 / USDA 110</strain>
    </source>
</reference>
<dbReference type="EC" id="3.6.4.-" evidence="1"/>
<dbReference type="EMBL" id="BA000040">
    <property type="protein sequence ID" value="BAC46802.1"/>
    <property type="molecule type" value="Genomic_DNA"/>
</dbReference>
<dbReference type="RefSeq" id="NP_768177.1">
    <property type="nucleotide sequence ID" value="NC_004463.1"/>
</dbReference>
<dbReference type="SMR" id="Q89U80"/>
<dbReference type="FunCoup" id="Q89U80">
    <property type="interactions" value="303"/>
</dbReference>
<dbReference type="STRING" id="224911.AAV28_04625"/>
<dbReference type="EnsemblBacteria" id="BAC46802">
    <property type="protein sequence ID" value="BAC46802"/>
    <property type="gene ID" value="BAC46802"/>
</dbReference>
<dbReference type="KEGG" id="bja:blr1537"/>
<dbReference type="PATRIC" id="fig|224911.44.peg.972"/>
<dbReference type="eggNOG" id="COG2255">
    <property type="taxonomic scope" value="Bacteria"/>
</dbReference>
<dbReference type="HOGENOM" id="CLU_055599_1_0_5"/>
<dbReference type="InParanoid" id="Q89U80"/>
<dbReference type="OrthoDB" id="9804478at2"/>
<dbReference type="PhylomeDB" id="Q89U80"/>
<dbReference type="Proteomes" id="UP000002526">
    <property type="component" value="Chromosome"/>
</dbReference>
<dbReference type="GO" id="GO:0005737">
    <property type="term" value="C:cytoplasm"/>
    <property type="evidence" value="ECO:0007669"/>
    <property type="project" value="UniProtKB-SubCell"/>
</dbReference>
<dbReference type="GO" id="GO:0048476">
    <property type="term" value="C:Holliday junction resolvase complex"/>
    <property type="evidence" value="ECO:0007669"/>
    <property type="project" value="UniProtKB-UniRule"/>
</dbReference>
<dbReference type="GO" id="GO:0005524">
    <property type="term" value="F:ATP binding"/>
    <property type="evidence" value="ECO:0007669"/>
    <property type="project" value="UniProtKB-UniRule"/>
</dbReference>
<dbReference type="GO" id="GO:0016887">
    <property type="term" value="F:ATP hydrolysis activity"/>
    <property type="evidence" value="ECO:0007669"/>
    <property type="project" value="InterPro"/>
</dbReference>
<dbReference type="GO" id="GO:0000400">
    <property type="term" value="F:four-way junction DNA binding"/>
    <property type="evidence" value="ECO:0007669"/>
    <property type="project" value="UniProtKB-UniRule"/>
</dbReference>
<dbReference type="GO" id="GO:0009378">
    <property type="term" value="F:four-way junction helicase activity"/>
    <property type="evidence" value="ECO:0007669"/>
    <property type="project" value="InterPro"/>
</dbReference>
<dbReference type="GO" id="GO:0006310">
    <property type="term" value="P:DNA recombination"/>
    <property type="evidence" value="ECO:0007669"/>
    <property type="project" value="UniProtKB-UniRule"/>
</dbReference>
<dbReference type="GO" id="GO:0006281">
    <property type="term" value="P:DNA repair"/>
    <property type="evidence" value="ECO:0007669"/>
    <property type="project" value="UniProtKB-UniRule"/>
</dbReference>
<dbReference type="CDD" id="cd00009">
    <property type="entry name" value="AAA"/>
    <property type="match status" value="1"/>
</dbReference>
<dbReference type="FunFam" id="3.40.50.300:FF:000073">
    <property type="entry name" value="Holliday junction ATP-dependent DNA helicase RuvB"/>
    <property type="match status" value="1"/>
</dbReference>
<dbReference type="Gene3D" id="1.10.8.60">
    <property type="match status" value="1"/>
</dbReference>
<dbReference type="Gene3D" id="3.40.50.300">
    <property type="entry name" value="P-loop containing nucleotide triphosphate hydrolases"/>
    <property type="match status" value="1"/>
</dbReference>
<dbReference type="Gene3D" id="1.10.10.10">
    <property type="entry name" value="Winged helix-like DNA-binding domain superfamily/Winged helix DNA-binding domain"/>
    <property type="match status" value="1"/>
</dbReference>
<dbReference type="HAMAP" id="MF_00016">
    <property type="entry name" value="DNA_HJ_migration_RuvB"/>
    <property type="match status" value="1"/>
</dbReference>
<dbReference type="InterPro" id="IPR003593">
    <property type="entry name" value="AAA+_ATPase"/>
</dbReference>
<dbReference type="InterPro" id="IPR041445">
    <property type="entry name" value="AAA_lid_4"/>
</dbReference>
<dbReference type="InterPro" id="IPR004605">
    <property type="entry name" value="DNA_helicase_Holl-junc_RuvB"/>
</dbReference>
<dbReference type="InterPro" id="IPR027417">
    <property type="entry name" value="P-loop_NTPase"/>
</dbReference>
<dbReference type="InterPro" id="IPR008824">
    <property type="entry name" value="RuvB-like_N"/>
</dbReference>
<dbReference type="InterPro" id="IPR008823">
    <property type="entry name" value="RuvB_C"/>
</dbReference>
<dbReference type="InterPro" id="IPR036388">
    <property type="entry name" value="WH-like_DNA-bd_sf"/>
</dbReference>
<dbReference type="InterPro" id="IPR036390">
    <property type="entry name" value="WH_DNA-bd_sf"/>
</dbReference>
<dbReference type="NCBIfam" id="NF000868">
    <property type="entry name" value="PRK00080.1"/>
    <property type="match status" value="1"/>
</dbReference>
<dbReference type="NCBIfam" id="TIGR00635">
    <property type="entry name" value="ruvB"/>
    <property type="match status" value="1"/>
</dbReference>
<dbReference type="PANTHER" id="PTHR42848">
    <property type="match status" value="1"/>
</dbReference>
<dbReference type="PANTHER" id="PTHR42848:SF1">
    <property type="entry name" value="HOLLIDAY JUNCTION BRANCH MIGRATION COMPLEX SUBUNIT RUVB"/>
    <property type="match status" value="1"/>
</dbReference>
<dbReference type="Pfam" id="PF17864">
    <property type="entry name" value="AAA_lid_4"/>
    <property type="match status" value="1"/>
</dbReference>
<dbReference type="Pfam" id="PF05491">
    <property type="entry name" value="RuvB_C"/>
    <property type="match status" value="1"/>
</dbReference>
<dbReference type="Pfam" id="PF05496">
    <property type="entry name" value="RuvB_N"/>
    <property type="match status" value="1"/>
</dbReference>
<dbReference type="SMART" id="SM00382">
    <property type="entry name" value="AAA"/>
    <property type="match status" value="1"/>
</dbReference>
<dbReference type="SUPFAM" id="SSF52540">
    <property type="entry name" value="P-loop containing nucleoside triphosphate hydrolases"/>
    <property type="match status" value="1"/>
</dbReference>
<dbReference type="SUPFAM" id="SSF46785">
    <property type="entry name" value="Winged helix' DNA-binding domain"/>
    <property type="match status" value="1"/>
</dbReference>
<feature type="chain" id="PRO_0000165504" description="Holliday junction branch migration complex subunit RuvB">
    <location>
        <begin position="1"/>
        <end position="351"/>
    </location>
</feature>
<feature type="region of interest" description="Disordered" evidence="2">
    <location>
        <begin position="1"/>
        <end position="22"/>
    </location>
</feature>
<feature type="region of interest" description="Large ATPase domain (RuvB-L)" evidence="1">
    <location>
        <begin position="2"/>
        <end position="185"/>
    </location>
</feature>
<feature type="region of interest" description="Small ATPAse domain (RuvB-S)" evidence="1">
    <location>
        <begin position="186"/>
        <end position="256"/>
    </location>
</feature>
<feature type="region of interest" description="Head domain (RuvB-H)" evidence="1">
    <location>
        <begin position="259"/>
        <end position="351"/>
    </location>
</feature>
<feature type="binding site" evidence="1">
    <location>
        <position position="24"/>
    </location>
    <ligand>
        <name>ATP</name>
        <dbReference type="ChEBI" id="CHEBI:30616"/>
    </ligand>
</feature>
<feature type="binding site" evidence="1">
    <location>
        <position position="25"/>
    </location>
    <ligand>
        <name>ATP</name>
        <dbReference type="ChEBI" id="CHEBI:30616"/>
    </ligand>
</feature>
<feature type="binding site" evidence="1">
    <location>
        <position position="66"/>
    </location>
    <ligand>
        <name>ATP</name>
        <dbReference type="ChEBI" id="CHEBI:30616"/>
    </ligand>
</feature>
<feature type="binding site" evidence="1">
    <location>
        <position position="69"/>
    </location>
    <ligand>
        <name>ATP</name>
        <dbReference type="ChEBI" id="CHEBI:30616"/>
    </ligand>
</feature>
<feature type="binding site" evidence="1">
    <location>
        <position position="70"/>
    </location>
    <ligand>
        <name>ATP</name>
        <dbReference type="ChEBI" id="CHEBI:30616"/>
    </ligand>
</feature>
<feature type="binding site" evidence="1">
    <location>
        <position position="70"/>
    </location>
    <ligand>
        <name>Mg(2+)</name>
        <dbReference type="ChEBI" id="CHEBI:18420"/>
    </ligand>
</feature>
<feature type="binding site" evidence="1">
    <location>
        <position position="71"/>
    </location>
    <ligand>
        <name>ATP</name>
        <dbReference type="ChEBI" id="CHEBI:30616"/>
    </ligand>
</feature>
<feature type="binding site" evidence="1">
    <location>
        <begin position="132"/>
        <end position="134"/>
    </location>
    <ligand>
        <name>ATP</name>
        <dbReference type="ChEBI" id="CHEBI:30616"/>
    </ligand>
</feature>
<feature type="binding site" evidence="1">
    <location>
        <position position="175"/>
    </location>
    <ligand>
        <name>ATP</name>
        <dbReference type="ChEBI" id="CHEBI:30616"/>
    </ligand>
</feature>
<feature type="binding site" evidence="1">
    <location>
        <position position="185"/>
    </location>
    <ligand>
        <name>ATP</name>
        <dbReference type="ChEBI" id="CHEBI:30616"/>
    </ligand>
</feature>
<feature type="binding site" evidence="1">
    <location>
        <position position="222"/>
    </location>
    <ligand>
        <name>ATP</name>
        <dbReference type="ChEBI" id="CHEBI:30616"/>
    </ligand>
</feature>
<feature type="binding site" evidence="1">
    <location>
        <position position="295"/>
    </location>
    <ligand>
        <name>DNA</name>
        <dbReference type="ChEBI" id="CHEBI:16991"/>
    </ligand>
</feature>
<feature type="binding site" evidence="1">
    <location>
        <position position="314"/>
    </location>
    <ligand>
        <name>DNA</name>
        <dbReference type="ChEBI" id="CHEBI:16991"/>
    </ligand>
</feature>
<feature type="binding site" evidence="1">
    <location>
        <position position="319"/>
    </location>
    <ligand>
        <name>DNA</name>
        <dbReference type="ChEBI" id="CHEBI:16991"/>
    </ligand>
</feature>
<protein>
    <recommendedName>
        <fullName evidence="1">Holliday junction branch migration complex subunit RuvB</fullName>
        <ecNumber evidence="1">3.6.4.-</ecNumber>
    </recommendedName>
</protein>
<gene>
    <name evidence="1" type="primary">ruvB</name>
    <name type="ordered locus">blr1537</name>
</gene>
<organism>
    <name type="scientific">Bradyrhizobium diazoefficiens (strain JCM 10833 / BCRC 13528 / IAM 13628 / NBRC 14792 / USDA 110)</name>
    <dbReference type="NCBI Taxonomy" id="224911"/>
    <lineage>
        <taxon>Bacteria</taxon>
        <taxon>Pseudomonadati</taxon>
        <taxon>Pseudomonadota</taxon>
        <taxon>Alphaproteobacteria</taxon>
        <taxon>Hyphomicrobiales</taxon>
        <taxon>Nitrobacteraceae</taxon>
        <taxon>Bradyrhizobium</taxon>
    </lineage>
</organism>
<keyword id="KW-0067">ATP-binding</keyword>
<keyword id="KW-0963">Cytoplasm</keyword>
<keyword id="KW-0227">DNA damage</keyword>
<keyword id="KW-0233">DNA recombination</keyword>
<keyword id="KW-0234">DNA repair</keyword>
<keyword id="KW-0238">DNA-binding</keyword>
<keyword id="KW-0378">Hydrolase</keyword>
<keyword id="KW-0547">Nucleotide-binding</keyword>
<keyword id="KW-1185">Reference proteome</keyword>
<accession>Q89U80</accession>
<comment type="function">
    <text evidence="1">The RuvA-RuvB-RuvC complex processes Holliday junction (HJ) DNA during genetic recombination and DNA repair, while the RuvA-RuvB complex plays an important role in the rescue of blocked DNA replication forks via replication fork reversal (RFR). RuvA specifically binds to HJ cruciform DNA, conferring on it an open structure. The RuvB hexamer acts as an ATP-dependent pump, pulling dsDNA into and through the RuvAB complex. RuvB forms 2 homohexamers on either side of HJ DNA bound by 1 or 2 RuvA tetramers; 4 subunits per hexamer contact DNA at a time. Coordinated motions by a converter formed by DNA-disengaged RuvB subunits stimulates ATP hydrolysis and nucleotide exchange. Immobilization of the converter enables RuvB to convert the ATP-contained energy into a lever motion, pulling 2 nucleotides of DNA out of the RuvA tetramer per ATP hydrolyzed, thus driving DNA branch migration. The RuvB motors rotate together with the DNA substrate, which together with the progressing nucleotide cycle form the mechanistic basis for DNA recombination by continuous HJ branch migration. Branch migration allows RuvC to scan DNA until it finds its consensus sequence, where it cleaves and resolves cruciform DNA.</text>
</comment>
<comment type="catalytic activity">
    <reaction evidence="1">
        <text>ATP + H2O = ADP + phosphate + H(+)</text>
        <dbReference type="Rhea" id="RHEA:13065"/>
        <dbReference type="ChEBI" id="CHEBI:15377"/>
        <dbReference type="ChEBI" id="CHEBI:15378"/>
        <dbReference type="ChEBI" id="CHEBI:30616"/>
        <dbReference type="ChEBI" id="CHEBI:43474"/>
        <dbReference type="ChEBI" id="CHEBI:456216"/>
    </reaction>
</comment>
<comment type="subunit">
    <text evidence="1">Homohexamer. Forms an RuvA(8)-RuvB(12)-Holliday junction (HJ) complex. HJ DNA is sandwiched between 2 RuvA tetramers; dsDNA enters through RuvA and exits via RuvB. An RuvB hexamer assembles on each DNA strand where it exits the tetramer. Each RuvB hexamer is contacted by two RuvA subunits (via domain III) on 2 adjacent RuvB subunits; this complex drives branch migration. In the full resolvosome a probable DNA-RuvA(4)-RuvB(12)-RuvC(2) complex forms which resolves the HJ.</text>
</comment>
<comment type="subcellular location">
    <subcellularLocation>
        <location evidence="1">Cytoplasm</location>
    </subcellularLocation>
</comment>
<comment type="domain">
    <text evidence="1">Has 3 domains, the large (RuvB-L) and small ATPase (RuvB-S) domains and the C-terminal head (RuvB-H) domain. The head domain binds DNA, while the ATPase domains jointly bind ATP, ADP or are empty depending on the state of the subunit in the translocation cycle. During a single DNA translocation step the structure of each domain remains the same, but their relative positions change.</text>
</comment>
<comment type="similarity">
    <text evidence="1">Belongs to the RuvB family.</text>
</comment>
<proteinExistence type="inferred from homology"/>
<sequence>MSDPKANRMVSPERRSDDVGDTALRPQSLSDFVGQQQARKNLSIFIEAARKRGEALDHVLFVGPPGLGKTTLAQIVAKELGVGFRATSGPVIAKAGDLAALLTNLEERDVLFIDEIHRLSPAVEEVLYPAMEDFQLDLIIGEGPAARSVKIELSKFTLVGATTRAGLLTNPLRDRFGIPVRLNFYTIEELESIVSRGARVLNVGMSADGANEIARRARGTPRIAGRLLRRVRDFASAADADTIDRKIADHALSALEVDAAGLDAMDRRYLTTIAMNYGGGPVGVETMAAALSEPRDAIEDIIEPYLIQCGYLQRTPRGRLLTSHAFRHLGLAEPNRDAAQFGLFGTDESDD</sequence>